<sequence length="516" mass="59594">MLRIPGKSLGYHEDISLTPWQAILASVIVLLGLKVATILYTAFYNVFLHPLRRFPGPVTWIAAPWMKSISHIRGQQDHQIVKLHQKLGHIIRVGPDTLSFTEMSAWRDIYGTGHAELPKHIYKGSGMEERPNIITAHSRDHHRFRKAMTPALTPEAITHEEALIKGYVDMLIEHLHKFAKSSDPYVNVSQWYTMTTFDIFGDLCYGESFNSLATGKQHLWLKSMSSMKVLVPLLVFPYISWLLVWWLLSPEQQRSLSDHQKRSYELTMKRIANRDTHPRHDFMTFMLRNRGEDQGVTDHELASNSDIVISAGSETTSTALTGITFFLCSNPDAMARCAKEVREAFKSDDEITFKATAELPFMLACIEETLRMYPPVPTSLIRRTLPGRPTLIAGELIPENTIVGVHHLATYRSERNFFDAKAFRPERWLAETRNDPKSPFKDDRLDAVRPFSYGPRNCIGRNLAYHEMRLILAKLLWHFDLKLKPGYEDWGFKQRTFQLWEKPKLVVEFKERQFQV</sequence>
<proteinExistence type="inferred from homology"/>
<reference key="1">
    <citation type="journal article" date="2011" name="PLoS Genet.">
        <title>Genome sequencing and comparative transcriptomics of the model entomopathogenic fungi Metarhizium anisopliae and M. acridum.</title>
        <authorList>
            <person name="Gao Q."/>
            <person name="Jin K."/>
            <person name="Ying S.-H."/>
            <person name="Zhang Y."/>
            <person name="Xiao G."/>
            <person name="Shang Y."/>
            <person name="Duan Z."/>
            <person name="Hu X."/>
            <person name="Xie X.-Q."/>
            <person name="Zhou G."/>
            <person name="Peng G."/>
            <person name="Luo Z."/>
            <person name="Huang W."/>
            <person name="Wang B."/>
            <person name="Fang W."/>
            <person name="Wang S."/>
            <person name="Zhong Y."/>
            <person name="Ma L.-J."/>
            <person name="St Leger R.J."/>
            <person name="Zhao G.-P."/>
            <person name="Pei Y."/>
            <person name="Feng M.-G."/>
            <person name="Xia Y."/>
            <person name="Wang C."/>
        </authorList>
    </citation>
    <scope>NUCLEOTIDE SEQUENCE [LARGE SCALE GENOMIC DNA]</scope>
    <source>
        <strain>ARSEF 23 / ATCC MYA-3075</strain>
    </source>
</reference>
<reference key="2">
    <citation type="journal article" date="2014" name="Proc. Natl. Acad. Sci. U.S.A.">
        <title>Trajectory and genomic determinants of fungal-pathogen speciation and host adaptation.</title>
        <authorList>
            <person name="Hu X."/>
            <person name="Xiao G."/>
            <person name="Zheng P."/>
            <person name="Shang Y."/>
            <person name="Su Y."/>
            <person name="Zhang X."/>
            <person name="Liu X."/>
            <person name="Zhan S."/>
            <person name="St Leger R.J."/>
            <person name="Wang C."/>
        </authorList>
    </citation>
    <scope>GENOME REANNOTATION</scope>
    <source>
        <strain>ARSEF 23 / ATCC MYA-3075</strain>
    </source>
</reference>
<reference key="3">
    <citation type="journal article" date="2012" name="Proc. Natl. Acad. Sci. U.S.A.">
        <title>Unveiling the biosynthetic puzzle of destruxins in Metarhizium species.</title>
        <authorList>
            <person name="Wang B."/>
            <person name="Kang Q."/>
            <person name="Lu Y."/>
            <person name="Bai L."/>
            <person name="Wang C."/>
        </authorList>
    </citation>
    <scope>FUNCTION</scope>
    <scope>DISRUPTION PHENOTYPE</scope>
</reference>
<accession>E9FCP5</accession>
<comment type="function">
    <text evidence="4">Cytochrome P450 monooxygenase; part of the gene cluster that mediates the biosynthesis of destruxins, insecticidal cyclic hexadepsipeptides which induce flaccid paralysis and visceral muscle contraction in insects through targeting the calcium channels and vacuolar-type ATPases (PubMed:22232661). The aldo-keto reductase dtxS3 converts alpha-ketoisocaproic acid from deaminated leucine into alpha-hydroxyisocaproic acid (HIC), which is the first substrate for destruxin assembly by dtxS1 (PubMed:22232661). L-aspartate decarboxylase dtxS4 converts aspartic acid into beta-alanine, the last substrate for the destruxin assembly line performed by dtxS1 (PubMed:22232661). The nonribosomal peptide synthetase dtxS1 synthesizes destruxins B and B2, whereas the cytochrome P450 monooxygenase dtxS2 is required to convert destruxin B into other destruxin derivatives, including destructins C, D, A and E (PubMed:22232661). Destruxin E-diol (ED) is further produced in a non-enzymatic manner from destruxin E (PubMed:22232661). Destruxins play an important role in virulence and escape from insect host immune defenses (PubMed:22232661).</text>
</comment>
<comment type="cofactor">
    <cofactor evidence="1">
        <name>heme</name>
        <dbReference type="ChEBI" id="CHEBI:30413"/>
    </cofactor>
</comment>
<comment type="pathway">
    <text evidence="4">Secondary metabolite biosynthesis.</text>
</comment>
<comment type="subcellular location">
    <subcellularLocation>
        <location evidence="2">Membrane</location>
        <topology evidence="2">Multi-pass membrane protein</topology>
    </subcellularLocation>
</comment>
<comment type="disruption phenotype">
    <text evidence="4">Leads to the accumulation of intermediary metabolites destruxin B, destruxin B2 and desmethyl-B (PubMed:22232661).</text>
</comment>
<comment type="similarity">
    <text evidence="6">Belongs to the cytochrome P450 family.</text>
</comment>
<organism>
    <name type="scientific">Metarhizium robertsii (strain ARSEF 23 / ATCC MYA-3075)</name>
    <name type="common">Metarhizium anisopliae (strain ARSEF 23)</name>
    <dbReference type="NCBI Taxonomy" id="655844"/>
    <lineage>
        <taxon>Eukaryota</taxon>
        <taxon>Fungi</taxon>
        <taxon>Dikarya</taxon>
        <taxon>Ascomycota</taxon>
        <taxon>Pezizomycotina</taxon>
        <taxon>Sordariomycetes</taxon>
        <taxon>Hypocreomycetidae</taxon>
        <taxon>Hypocreales</taxon>
        <taxon>Clavicipitaceae</taxon>
        <taxon>Metarhizium</taxon>
    </lineage>
</organism>
<keyword id="KW-0325">Glycoprotein</keyword>
<keyword id="KW-0349">Heme</keyword>
<keyword id="KW-0408">Iron</keyword>
<keyword id="KW-0472">Membrane</keyword>
<keyword id="KW-0479">Metal-binding</keyword>
<keyword id="KW-0503">Monooxygenase</keyword>
<keyword id="KW-0560">Oxidoreductase</keyword>
<keyword id="KW-0812">Transmembrane</keyword>
<keyword id="KW-1133">Transmembrane helix</keyword>
<name>DTXS2_METRA</name>
<dbReference type="EMBL" id="ADNJ02000010">
    <property type="protein sequence ID" value="EFY94501.2"/>
    <property type="molecule type" value="Genomic_DNA"/>
</dbReference>
<dbReference type="RefSeq" id="XP_007826233.2">
    <property type="nucleotide sequence ID" value="XM_007828042.2"/>
</dbReference>
<dbReference type="SMR" id="E9FCP5"/>
<dbReference type="GlyCosmos" id="E9FCP5">
    <property type="glycosylation" value="1 site, No reported glycans"/>
</dbReference>
<dbReference type="GeneID" id="19264330"/>
<dbReference type="KEGG" id="maj:MAA_10044"/>
<dbReference type="HOGENOM" id="CLU_001570_14_11_1"/>
<dbReference type="OrthoDB" id="5119769at2759"/>
<dbReference type="Proteomes" id="UP000002498">
    <property type="component" value="Unassembled WGS sequence"/>
</dbReference>
<dbReference type="GO" id="GO:0016020">
    <property type="term" value="C:membrane"/>
    <property type="evidence" value="ECO:0007669"/>
    <property type="project" value="UniProtKB-SubCell"/>
</dbReference>
<dbReference type="GO" id="GO:0020037">
    <property type="term" value="F:heme binding"/>
    <property type="evidence" value="ECO:0007669"/>
    <property type="project" value="InterPro"/>
</dbReference>
<dbReference type="GO" id="GO:0005506">
    <property type="term" value="F:iron ion binding"/>
    <property type="evidence" value="ECO:0007669"/>
    <property type="project" value="InterPro"/>
</dbReference>
<dbReference type="GO" id="GO:0004497">
    <property type="term" value="F:monooxygenase activity"/>
    <property type="evidence" value="ECO:0007669"/>
    <property type="project" value="UniProtKB-KW"/>
</dbReference>
<dbReference type="GO" id="GO:0016705">
    <property type="term" value="F:oxidoreductase activity, acting on paired donors, with incorporation or reduction of molecular oxygen"/>
    <property type="evidence" value="ECO:0007669"/>
    <property type="project" value="InterPro"/>
</dbReference>
<dbReference type="CDD" id="cd11058">
    <property type="entry name" value="CYP60B-like"/>
    <property type="match status" value="1"/>
</dbReference>
<dbReference type="Gene3D" id="1.10.630.10">
    <property type="entry name" value="Cytochrome P450"/>
    <property type="match status" value="1"/>
</dbReference>
<dbReference type="InterPro" id="IPR001128">
    <property type="entry name" value="Cyt_P450"/>
</dbReference>
<dbReference type="InterPro" id="IPR017972">
    <property type="entry name" value="Cyt_P450_CS"/>
</dbReference>
<dbReference type="InterPro" id="IPR002401">
    <property type="entry name" value="Cyt_P450_E_grp-I"/>
</dbReference>
<dbReference type="InterPro" id="IPR036396">
    <property type="entry name" value="Cyt_P450_sf"/>
</dbReference>
<dbReference type="InterPro" id="IPR050121">
    <property type="entry name" value="Cytochrome_P450_monoxygenase"/>
</dbReference>
<dbReference type="PANTHER" id="PTHR24305">
    <property type="entry name" value="CYTOCHROME P450"/>
    <property type="match status" value="1"/>
</dbReference>
<dbReference type="PANTHER" id="PTHR24305:SF230">
    <property type="entry name" value="P450, PUTATIVE (EUROFUNG)-RELATED"/>
    <property type="match status" value="1"/>
</dbReference>
<dbReference type="Pfam" id="PF00067">
    <property type="entry name" value="p450"/>
    <property type="match status" value="1"/>
</dbReference>
<dbReference type="PRINTS" id="PR00463">
    <property type="entry name" value="EP450I"/>
</dbReference>
<dbReference type="PRINTS" id="PR00385">
    <property type="entry name" value="P450"/>
</dbReference>
<dbReference type="SUPFAM" id="SSF48264">
    <property type="entry name" value="Cytochrome P450"/>
    <property type="match status" value="1"/>
</dbReference>
<dbReference type="PROSITE" id="PS00086">
    <property type="entry name" value="CYTOCHROME_P450"/>
    <property type="match status" value="1"/>
</dbReference>
<feature type="chain" id="PRO_0000436437" description="Cytochrome P450 monooxygenase dtxS2">
    <location>
        <begin position="1"/>
        <end position="516"/>
    </location>
</feature>
<feature type="transmembrane region" description="Helical" evidence="2">
    <location>
        <begin position="23"/>
        <end position="43"/>
    </location>
</feature>
<feature type="transmembrane region" description="Helical" evidence="2">
    <location>
        <begin position="229"/>
        <end position="249"/>
    </location>
</feature>
<feature type="binding site" description="axial binding residue" evidence="1">
    <location>
        <position position="458"/>
    </location>
    <ligand>
        <name>heme</name>
        <dbReference type="ChEBI" id="CHEBI:30413"/>
    </ligand>
    <ligandPart>
        <name>Fe</name>
        <dbReference type="ChEBI" id="CHEBI:18248"/>
    </ligandPart>
</feature>
<feature type="glycosylation site" description="N-linked (GlcNAc...) asparagine" evidence="3">
    <location>
        <position position="187"/>
    </location>
</feature>
<gene>
    <name evidence="5" type="primary">dtxS2</name>
    <name type="ORF">MAA_10044</name>
</gene>
<evidence type="ECO:0000250" key="1">
    <source>
        <dbReference type="UniProtKB" id="P04798"/>
    </source>
</evidence>
<evidence type="ECO:0000255" key="2"/>
<evidence type="ECO:0000255" key="3">
    <source>
        <dbReference type="PROSITE-ProRule" id="PRU00498"/>
    </source>
</evidence>
<evidence type="ECO:0000269" key="4">
    <source>
    </source>
</evidence>
<evidence type="ECO:0000303" key="5">
    <source>
    </source>
</evidence>
<evidence type="ECO:0000305" key="6"/>
<protein>
    <recommendedName>
        <fullName evidence="6">Cytochrome P450 monooxygenase dtxS2</fullName>
    </recommendedName>
    <alternativeName>
        <fullName evidence="5">Destruxin synthesis protein 1</fullName>
    </alternativeName>
</protein>